<comment type="function">
    <text evidence="1">3'-5' RNA exonuclease that trims the 3' end of oligo(U) tracts of the pre-U6 small nuclear RNA (snRNA) molecule, leading to the formation of a mature U6 snRNA 3' end-terminated with a 2',3'-cyclic phosphate. Participates in the U6 snRNA 3' end processing that prevents U6 snRNA degradation.</text>
</comment>
<comment type="catalytic activity">
    <reaction evidence="1">
        <text>a 3'-end uridylyl-uridine-RNA = a 3'-end 2',3'-cyclophospho-uridine-RNA + uridine</text>
        <dbReference type="Rhea" id="RHEA:46052"/>
        <dbReference type="Rhea" id="RHEA-COMP:17384"/>
        <dbReference type="Rhea" id="RHEA-COMP:17385"/>
        <dbReference type="ChEBI" id="CHEBI:16704"/>
        <dbReference type="ChEBI" id="CHEBI:85643"/>
        <dbReference type="ChEBI" id="CHEBI:85644"/>
    </reaction>
    <physiologicalReaction direction="left-to-right" evidence="1">
        <dbReference type="Rhea" id="RHEA:46053"/>
    </physiologicalReaction>
</comment>
<comment type="subcellular location">
    <subcellularLocation>
        <location evidence="2">Nucleus</location>
    </subcellularLocation>
</comment>
<comment type="alternative products">
    <event type="alternative splicing"/>
    <isoform>
        <id>Q9VHB3-1</id>
        <name>1</name>
        <sequence type="displayed"/>
    </isoform>
    <isoform>
        <id>Q9VHB3-2</id>
        <name>2</name>
        <sequence type="described" ref="VSP_022737"/>
    </isoform>
</comment>
<comment type="similarity">
    <text evidence="2">Belongs to the 2H phosphoesterase superfamily. USB1 family.</text>
</comment>
<proteinExistence type="evidence at transcript level"/>
<sequence>MALVDYGGSSSSASEDEDCTENIQTPALITLKRPALPKAATLLGPKKPKPEEFVEDVVDDPAEHGGRMRSFKHERGNWATYVYVPATACVDQLEEFQTEAIARLEPHLELQPNESLHLSLSRTVVLQYHQIDEFSRSLQSALNSSAGFAATLQGLRIYTNEERTRTFIAAPLDAAFVEKMTAILQPIDQVMLDYRLQQFYDPASFHVSLLWCVGDQETLLNEKLTELKELLDDQDKLCLAVNEVHLKCGNKDFTYSLK</sequence>
<protein>
    <recommendedName>
        <fullName evidence="1">U6 snRNA phosphodiesterase 1</fullName>
    </recommendedName>
    <alternativeName>
        <fullName evidence="1">3'-5' RNA exonuclease USB1</fullName>
        <ecNumber evidence="1">4.6.1.-</ecNumber>
    </alternativeName>
</protein>
<evidence type="ECO:0000250" key="1">
    <source>
        <dbReference type="UniProtKB" id="Q9BQ65"/>
    </source>
</evidence>
<evidence type="ECO:0000255" key="2">
    <source>
        <dbReference type="HAMAP-Rule" id="MF_03040"/>
    </source>
</evidence>
<evidence type="ECO:0000256" key="3">
    <source>
        <dbReference type="SAM" id="MobiDB-lite"/>
    </source>
</evidence>
<evidence type="ECO:0000303" key="4">
    <source ref="3"/>
</evidence>
<evidence type="ECO:0000305" key="5"/>
<dbReference type="EC" id="4.6.1.-" evidence="1"/>
<dbReference type="EMBL" id="AE014297">
    <property type="protein sequence ID" value="AAF54405.1"/>
    <property type="molecule type" value="Genomic_DNA"/>
</dbReference>
<dbReference type="EMBL" id="BT023530">
    <property type="protein sequence ID" value="AAY84930.1"/>
    <property type="molecule type" value="mRNA"/>
</dbReference>
<dbReference type="EMBL" id="BT023543">
    <property type="protein sequence ID" value="AAY84943.1"/>
    <property type="molecule type" value="mRNA"/>
</dbReference>
<dbReference type="RefSeq" id="NP_649911.1">
    <molecule id="Q9VHB3-1"/>
    <property type="nucleotide sequence ID" value="NM_141654.2"/>
</dbReference>
<dbReference type="SMR" id="Q9VHB3"/>
<dbReference type="BioGRID" id="66314">
    <property type="interactions" value="3"/>
</dbReference>
<dbReference type="FunCoup" id="Q9VHB3">
    <property type="interactions" value="492"/>
</dbReference>
<dbReference type="IntAct" id="Q9VHB3">
    <property type="interactions" value="2"/>
</dbReference>
<dbReference type="STRING" id="7227.FBpp0081590"/>
<dbReference type="PaxDb" id="7227-FBpp0081590"/>
<dbReference type="DNASU" id="41155"/>
<dbReference type="EnsemblMetazoa" id="FBtr0082112">
    <molecule id="Q9VHB3-1"/>
    <property type="protein sequence ID" value="FBpp0081590"/>
    <property type="gene ID" value="FBgn0037713"/>
</dbReference>
<dbReference type="GeneID" id="41155"/>
<dbReference type="KEGG" id="dme:Dmel_CG16790"/>
<dbReference type="UCSC" id="CG16790-RA">
    <molecule id="Q9VHB3-1"/>
    <property type="organism name" value="d. melanogaster"/>
</dbReference>
<dbReference type="AGR" id="FB:FBgn0037713"/>
<dbReference type="FlyBase" id="FBgn0037713">
    <property type="gene designation" value="CG16790"/>
</dbReference>
<dbReference type="VEuPathDB" id="VectorBase:FBgn0037713"/>
<dbReference type="eggNOG" id="KOG3102">
    <property type="taxonomic scope" value="Eukaryota"/>
</dbReference>
<dbReference type="GeneTree" id="ENSGT00390000004596"/>
<dbReference type="HOGENOM" id="CLU_057212_2_0_1"/>
<dbReference type="InParanoid" id="Q9VHB3"/>
<dbReference type="OMA" id="KTVVLQY"/>
<dbReference type="OrthoDB" id="49151at2759"/>
<dbReference type="PhylomeDB" id="Q9VHB3"/>
<dbReference type="BioGRID-ORCS" id="41155">
    <property type="hits" value="0 hits in 1 CRISPR screen"/>
</dbReference>
<dbReference type="GenomeRNAi" id="41155"/>
<dbReference type="PRO" id="PR:Q9VHB3"/>
<dbReference type="Proteomes" id="UP000000803">
    <property type="component" value="Chromosome 3R"/>
</dbReference>
<dbReference type="Bgee" id="FBgn0037713">
    <property type="expression patterns" value="Expressed in enterocyte of anterior adult midgut epithelium in digestive tract and 42 other cell types or tissues"/>
</dbReference>
<dbReference type="ExpressionAtlas" id="Q9VHB3">
    <property type="expression patterns" value="baseline and differential"/>
</dbReference>
<dbReference type="GO" id="GO:0005634">
    <property type="term" value="C:nucleus"/>
    <property type="evidence" value="ECO:0000318"/>
    <property type="project" value="GO_Central"/>
</dbReference>
<dbReference type="GO" id="GO:0000175">
    <property type="term" value="F:3'-5'-RNA exonuclease activity"/>
    <property type="evidence" value="ECO:0000318"/>
    <property type="project" value="GO_Central"/>
</dbReference>
<dbReference type="GO" id="GO:0016829">
    <property type="term" value="F:lyase activity"/>
    <property type="evidence" value="ECO:0007669"/>
    <property type="project" value="UniProtKB-KW"/>
</dbReference>
<dbReference type="GO" id="GO:1990838">
    <property type="term" value="F:poly(U)-specific exoribonuclease activity, producing 3' uridine cyclic phosphate ends"/>
    <property type="evidence" value="ECO:0007669"/>
    <property type="project" value="UniProtKB-UniRule"/>
</dbReference>
<dbReference type="GO" id="GO:0034477">
    <property type="term" value="P:U6 snRNA 3'-end processing"/>
    <property type="evidence" value="ECO:0000318"/>
    <property type="project" value="GO_Central"/>
</dbReference>
<dbReference type="FunFam" id="3.90.1140.10:FF:000002">
    <property type="entry name" value="U6 snRNA phosphodiesterase"/>
    <property type="match status" value="1"/>
</dbReference>
<dbReference type="Gene3D" id="3.90.1140.10">
    <property type="entry name" value="Cyclic phosphodiesterase"/>
    <property type="match status" value="1"/>
</dbReference>
<dbReference type="HAMAP" id="MF_03040">
    <property type="entry name" value="USB1"/>
    <property type="match status" value="1"/>
</dbReference>
<dbReference type="InterPro" id="IPR009097">
    <property type="entry name" value="Cyclic_Pdiesterase"/>
</dbReference>
<dbReference type="InterPro" id="IPR027521">
    <property type="entry name" value="Usb1"/>
</dbReference>
<dbReference type="PANTHER" id="PTHR13522">
    <property type="entry name" value="U6 SNRNA PHOSPHODIESTERASE 1"/>
    <property type="match status" value="1"/>
</dbReference>
<dbReference type="PANTHER" id="PTHR13522:SF3">
    <property type="entry name" value="U6 SNRNA PHOSPHODIESTERASE 1"/>
    <property type="match status" value="1"/>
</dbReference>
<dbReference type="Pfam" id="PF09749">
    <property type="entry name" value="HVSL"/>
    <property type="match status" value="1"/>
</dbReference>
<dbReference type="SUPFAM" id="SSF55144">
    <property type="entry name" value="LigT-like"/>
    <property type="match status" value="1"/>
</dbReference>
<feature type="chain" id="PRO_0000274396" description="U6 snRNA phosphodiesterase 1">
    <location>
        <begin position="1"/>
        <end position="258"/>
    </location>
</feature>
<feature type="region of interest" description="Disordered" evidence="3">
    <location>
        <begin position="1"/>
        <end position="20"/>
    </location>
</feature>
<feature type="active site" description="Proton acceptor" evidence="2">
    <location>
        <position position="117"/>
    </location>
</feature>
<feature type="active site" description="Proton donor" evidence="2">
    <location>
        <position position="206"/>
    </location>
</feature>
<feature type="binding site" evidence="1">
    <location>
        <begin position="117"/>
        <end position="119"/>
    </location>
    <ligand>
        <name>AMP</name>
        <dbReference type="ChEBI" id="CHEBI:456215"/>
    </ligand>
</feature>
<feature type="binding site" evidence="1">
    <location>
        <position position="200"/>
    </location>
    <ligand>
        <name>AMP</name>
        <dbReference type="ChEBI" id="CHEBI:456215"/>
    </ligand>
</feature>
<feature type="binding site" evidence="1">
    <location>
        <position position="200"/>
    </location>
    <ligand>
        <name>UMP</name>
        <dbReference type="ChEBI" id="CHEBI:57865"/>
    </ligand>
</feature>
<feature type="binding site" evidence="1">
    <location>
        <begin position="202"/>
        <end position="208"/>
    </location>
    <ligand>
        <name>AMP</name>
        <dbReference type="ChEBI" id="CHEBI:456215"/>
    </ligand>
</feature>
<feature type="binding site" evidence="1">
    <location>
        <begin position="204"/>
        <end position="208"/>
    </location>
    <ligand>
        <name>UMP</name>
        <dbReference type="ChEBI" id="CHEBI:57865"/>
    </ligand>
</feature>
<feature type="splice variant" id="VSP_022737" description="In isoform 2." evidence="4">
    <location>
        <begin position="1"/>
        <end position="67"/>
    </location>
</feature>
<feature type="sequence conflict" description="In Ref. 3; AAY84930." evidence="5" ref="3">
    <original>G</original>
    <variation>S</variation>
    <location>
        <position position="66"/>
    </location>
</feature>
<name>USB1_DROME</name>
<gene>
    <name type="ORF">CG16790</name>
</gene>
<keyword id="KW-0025">Alternative splicing</keyword>
<keyword id="KW-0378">Hydrolase</keyword>
<keyword id="KW-0456">Lyase</keyword>
<keyword id="KW-0540">Nuclease</keyword>
<keyword id="KW-0539">Nucleus</keyword>
<keyword id="KW-1185">Reference proteome</keyword>
<accession>Q9VHB3</accession>
<accession>Q4QQ73</accession>
<accession>Q4QQ86</accession>
<organism>
    <name type="scientific">Drosophila melanogaster</name>
    <name type="common">Fruit fly</name>
    <dbReference type="NCBI Taxonomy" id="7227"/>
    <lineage>
        <taxon>Eukaryota</taxon>
        <taxon>Metazoa</taxon>
        <taxon>Ecdysozoa</taxon>
        <taxon>Arthropoda</taxon>
        <taxon>Hexapoda</taxon>
        <taxon>Insecta</taxon>
        <taxon>Pterygota</taxon>
        <taxon>Neoptera</taxon>
        <taxon>Endopterygota</taxon>
        <taxon>Diptera</taxon>
        <taxon>Brachycera</taxon>
        <taxon>Muscomorpha</taxon>
        <taxon>Ephydroidea</taxon>
        <taxon>Drosophilidae</taxon>
        <taxon>Drosophila</taxon>
        <taxon>Sophophora</taxon>
    </lineage>
</organism>
<reference key="1">
    <citation type="journal article" date="2000" name="Science">
        <title>The genome sequence of Drosophila melanogaster.</title>
        <authorList>
            <person name="Adams M.D."/>
            <person name="Celniker S.E."/>
            <person name="Holt R.A."/>
            <person name="Evans C.A."/>
            <person name="Gocayne J.D."/>
            <person name="Amanatides P.G."/>
            <person name="Scherer S.E."/>
            <person name="Li P.W."/>
            <person name="Hoskins R.A."/>
            <person name="Galle R.F."/>
            <person name="George R.A."/>
            <person name="Lewis S.E."/>
            <person name="Richards S."/>
            <person name="Ashburner M."/>
            <person name="Henderson S.N."/>
            <person name="Sutton G.G."/>
            <person name="Wortman J.R."/>
            <person name="Yandell M.D."/>
            <person name="Zhang Q."/>
            <person name="Chen L.X."/>
            <person name="Brandon R.C."/>
            <person name="Rogers Y.-H.C."/>
            <person name="Blazej R.G."/>
            <person name="Champe M."/>
            <person name="Pfeiffer B.D."/>
            <person name="Wan K.H."/>
            <person name="Doyle C."/>
            <person name="Baxter E.G."/>
            <person name="Helt G."/>
            <person name="Nelson C.R."/>
            <person name="Miklos G.L.G."/>
            <person name="Abril J.F."/>
            <person name="Agbayani A."/>
            <person name="An H.-J."/>
            <person name="Andrews-Pfannkoch C."/>
            <person name="Baldwin D."/>
            <person name="Ballew R.M."/>
            <person name="Basu A."/>
            <person name="Baxendale J."/>
            <person name="Bayraktaroglu L."/>
            <person name="Beasley E.M."/>
            <person name="Beeson K.Y."/>
            <person name="Benos P.V."/>
            <person name="Berman B.P."/>
            <person name="Bhandari D."/>
            <person name="Bolshakov S."/>
            <person name="Borkova D."/>
            <person name="Botchan M.R."/>
            <person name="Bouck J."/>
            <person name="Brokstein P."/>
            <person name="Brottier P."/>
            <person name="Burtis K.C."/>
            <person name="Busam D.A."/>
            <person name="Butler H."/>
            <person name="Cadieu E."/>
            <person name="Center A."/>
            <person name="Chandra I."/>
            <person name="Cherry J.M."/>
            <person name="Cawley S."/>
            <person name="Dahlke C."/>
            <person name="Davenport L.B."/>
            <person name="Davies P."/>
            <person name="de Pablos B."/>
            <person name="Delcher A."/>
            <person name="Deng Z."/>
            <person name="Mays A.D."/>
            <person name="Dew I."/>
            <person name="Dietz S.M."/>
            <person name="Dodson K."/>
            <person name="Doup L.E."/>
            <person name="Downes M."/>
            <person name="Dugan-Rocha S."/>
            <person name="Dunkov B.C."/>
            <person name="Dunn P."/>
            <person name="Durbin K.J."/>
            <person name="Evangelista C.C."/>
            <person name="Ferraz C."/>
            <person name="Ferriera S."/>
            <person name="Fleischmann W."/>
            <person name="Fosler C."/>
            <person name="Gabrielian A.E."/>
            <person name="Garg N.S."/>
            <person name="Gelbart W.M."/>
            <person name="Glasser K."/>
            <person name="Glodek A."/>
            <person name="Gong F."/>
            <person name="Gorrell J.H."/>
            <person name="Gu Z."/>
            <person name="Guan P."/>
            <person name="Harris M."/>
            <person name="Harris N.L."/>
            <person name="Harvey D.A."/>
            <person name="Heiman T.J."/>
            <person name="Hernandez J.R."/>
            <person name="Houck J."/>
            <person name="Hostin D."/>
            <person name="Houston K.A."/>
            <person name="Howland T.J."/>
            <person name="Wei M.-H."/>
            <person name="Ibegwam C."/>
            <person name="Jalali M."/>
            <person name="Kalush F."/>
            <person name="Karpen G.H."/>
            <person name="Ke Z."/>
            <person name="Kennison J.A."/>
            <person name="Ketchum K.A."/>
            <person name="Kimmel B.E."/>
            <person name="Kodira C.D."/>
            <person name="Kraft C.L."/>
            <person name="Kravitz S."/>
            <person name="Kulp D."/>
            <person name="Lai Z."/>
            <person name="Lasko P."/>
            <person name="Lei Y."/>
            <person name="Levitsky A.A."/>
            <person name="Li J.H."/>
            <person name="Li Z."/>
            <person name="Liang Y."/>
            <person name="Lin X."/>
            <person name="Liu X."/>
            <person name="Mattei B."/>
            <person name="McIntosh T.C."/>
            <person name="McLeod M.P."/>
            <person name="McPherson D."/>
            <person name="Merkulov G."/>
            <person name="Milshina N.V."/>
            <person name="Mobarry C."/>
            <person name="Morris J."/>
            <person name="Moshrefi A."/>
            <person name="Mount S.M."/>
            <person name="Moy M."/>
            <person name="Murphy B."/>
            <person name="Murphy L."/>
            <person name="Muzny D.M."/>
            <person name="Nelson D.L."/>
            <person name="Nelson D.R."/>
            <person name="Nelson K.A."/>
            <person name="Nixon K."/>
            <person name="Nusskern D.R."/>
            <person name="Pacleb J.M."/>
            <person name="Palazzolo M."/>
            <person name="Pittman G.S."/>
            <person name="Pan S."/>
            <person name="Pollard J."/>
            <person name="Puri V."/>
            <person name="Reese M.G."/>
            <person name="Reinert K."/>
            <person name="Remington K."/>
            <person name="Saunders R.D.C."/>
            <person name="Scheeler F."/>
            <person name="Shen H."/>
            <person name="Shue B.C."/>
            <person name="Siden-Kiamos I."/>
            <person name="Simpson M."/>
            <person name="Skupski M.P."/>
            <person name="Smith T.J."/>
            <person name="Spier E."/>
            <person name="Spradling A.C."/>
            <person name="Stapleton M."/>
            <person name="Strong R."/>
            <person name="Sun E."/>
            <person name="Svirskas R."/>
            <person name="Tector C."/>
            <person name="Turner R."/>
            <person name="Venter E."/>
            <person name="Wang A.H."/>
            <person name="Wang X."/>
            <person name="Wang Z.-Y."/>
            <person name="Wassarman D.A."/>
            <person name="Weinstock G.M."/>
            <person name="Weissenbach J."/>
            <person name="Williams S.M."/>
            <person name="Woodage T."/>
            <person name="Worley K.C."/>
            <person name="Wu D."/>
            <person name="Yang S."/>
            <person name="Yao Q.A."/>
            <person name="Ye J."/>
            <person name="Yeh R.-F."/>
            <person name="Zaveri J.S."/>
            <person name="Zhan M."/>
            <person name="Zhang G."/>
            <person name="Zhao Q."/>
            <person name="Zheng L."/>
            <person name="Zheng X.H."/>
            <person name="Zhong F.N."/>
            <person name="Zhong W."/>
            <person name="Zhou X."/>
            <person name="Zhu S.C."/>
            <person name="Zhu X."/>
            <person name="Smith H.O."/>
            <person name="Gibbs R.A."/>
            <person name="Myers E.W."/>
            <person name="Rubin G.M."/>
            <person name="Venter J.C."/>
        </authorList>
    </citation>
    <scope>NUCLEOTIDE SEQUENCE [LARGE SCALE GENOMIC DNA]</scope>
    <source>
        <strain>Berkeley</strain>
    </source>
</reference>
<reference key="2">
    <citation type="journal article" date="2002" name="Genome Biol.">
        <title>Annotation of the Drosophila melanogaster euchromatic genome: a systematic review.</title>
        <authorList>
            <person name="Misra S."/>
            <person name="Crosby M.A."/>
            <person name="Mungall C.J."/>
            <person name="Matthews B.B."/>
            <person name="Campbell K.S."/>
            <person name="Hradecky P."/>
            <person name="Huang Y."/>
            <person name="Kaminker J.S."/>
            <person name="Millburn G.H."/>
            <person name="Prochnik S.E."/>
            <person name="Smith C.D."/>
            <person name="Tupy J.L."/>
            <person name="Whitfield E.J."/>
            <person name="Bayraktaroglu L."/>
            <person name="Berman B.P."/>
            <person name="Bettencourt B.R."/>
            <person name="Celniker S.E."/>
            <person name="de Grey A.D.N.J."/>
            <person name="Drysdale R.A."/>
            <person name="Harris N.L."/>
            <person name="Richter J."/>
            <person name="Russo S."/>
            <person name="Schroeder A.J."/>
            <person name="Shu S.Q."/>
            <person name="Stapleton M."/>
            <person name="Yamada C."/>
            <person name="Ashburner M."/>
            <person name="Gelbart W.M."/>
            <person name="Rubin G.M."/>
            <person name="Lewis S.E."/>
        </authorList>
    </citation>
    <scope>GENOME REANNOTATION</scope>
    <source>
        <strain>Berkeley</strain>
    </source>
</reference>
<reference key="3">
    <citation type="submission" date="2005-06" db="EMBL/GenBank/DDBJ databases">
        <authorList>
            <person name="Stapleton M."/>
            <person name="Carlson J.W."/>
            <person name="Chavez C."/>
            <person name="Frise E."/>
            <person name="George R.A."/>
            <person name="Pacleb J.M."/>
            <person name="Park S."/>
            <person name="Wan K.H."/>
            <person name="Yu C."/>
            <person name="Celniker S.E."/>
        </authorList>
    </citation>
    <scope>NUCLEOTIDE SEQUENCE [LARGE SCALE MRNA] (ISOFORMS 1 AND 2)</scope>
    <source>
        <strain>Berkeley</strain>
    </source>
</reference>